<dbReference type="SMR" id="P0C611"/>
<dbReference type="ConoServer" id="2810">
    <property type="toxin name" value="Fi11.8"/>
</dbReference>
<dbReference type="GO" id="GO:0005576">
    <property type="term" value="C:extracellular region"/>
    <property type="evidence" value="ECO:0007669"/>
    <property type="project" value="UniProtKB-SubCell"/>
</dbReference>
<dbReference type="GO" id="GO:0017080">
    <property type="term" value="F:sodium channel regulator activity"/>
    <property type="evidence" value="ECO:0007669"/>
    <property type="project" value="UniProtKB-KW"/>
</dbReference>
<dbReference type="GO" id="GO:0090729">
    <property type="term" value="F:toxin activity"/>
    <property type="evidence" value="ECO:0007669"/>
    <property type="project" value="UniProtKB-KW"/>
</dbReference>
<dbReference type="Gene3D" id="4.10.40.80">
    <property type="match status" value="1"/>
</dbReference>
<dbReference type="InterPro" id="IPR013141">
    <property type="entry name" value="Conotoxin-I_CS"/>
</dbReference>
<dbReference type="InterPro" id="IPR012624">
    <property type="entry name" value="Toxin_19"/>
</dbReference>
<dbReference type="Pfam" id="PF08088">
    <property type="entry name" value="Toxin_19"/>
    <property type="match status" value="1"/>
</dbReference>
<dbReference type="PROSITE" id="PS60019">
    <property type="entry name" value="I_CONOTOXIN"/>
    <property type="match status" value="1"/>
</dbReference>
<keyword id="KW-0102">Bromination</keyword>
<keyword id="KW-0208">D-amino acid</keyword>
<keyword id="KW-1015">Disulfide bond</keyword>
<keyword id="KW-0379">Hydroxylation</keyword>
<keyword id="KW-0872">Ion channel impairing toxin</keyword>
<keyword id="KW-0528">Neurotoxin</keyword>
<keyword id="KW-0964">Secreted</keyword>
<keyword id="KW-0800">Toxin</keyword>
<keyword id="KW-0738">Voltage-gated sodium channel impairing toxin</keyword>
<name>I1B8_CONFI</name>
<comment type="function">
    <text evidence="1">Iota-conotoxins bind to voltage-gated sodium channels (Nav) and act as agonists by shifting the voltage-dependence of activation to more hyperpolarized levels. Produces general excitatory symptoms (By similarity).</text>
</comment>
<comment type="subcellular location">
    <subcellularLocation>
        <location evidence="1">Secreted</location>
    </subcellularLocation>
</comment>
<comment type="tissue specificity">
    <text>Expressed by the venom duct.</text>
</comment>
<comment type="domain">
    <text>The cysteine framework is XI (C-C-CC-CC-C-C).</text>
</comment>
<comment type="similarity">
    <text evidence="3">Belongs to the conotoxin I1 superfamily.</text>
</comment>
<sequence>GPSSCKADEEPCEYHADCCNCCLSGICAPSTNWILPGCSTSSFFKI</sequence>
<feature type="chain" id="PRO_0000314087" description="Iota-conotoxin-like Fi11.8">
    <location>
        <begin position="1"/>
        <end position="46"/>
    </location>
</feature>
<feature type="modified residue" description="4-hydroxyproline" evidence="1">
    <location>
        <position position="2"/>
    </location>
</feature>
<feature type="modified residue" description="4-hydroxyproline" evidence="1">
    <location>
        <position position="11"/>
    </location>
</feature>
<feature type="modified residue" description="4-hydroxyproline" evidence="1">
    <location>
        <position position="29"/>
    </location>
</feature>
<feature type="modified residue" description="6'-bromotryptophan" evidence="1">
    <location>
        <position position="33"/>
    </location>
</feature>
<feature type="modified residue" description="D-phenylalanine" evidence="1">
    <location>
        <position position="44"/>
    </location>
</feature>
<feature type="disulfide bond" evidence="2">
    <location>
        <begin position="5"/>
        <end position="19"/>
    </location>
</feature>
<feature type="disulfide bond" evidence="2">
    <location>
        <begin position="12"/>
        <end position="22"/>
    </location>
</feature>
<feature type="disulfide bond" evidence="2">
    <location>
        <begin position="18"/>
        <end position="27"/>
    </location>
</feature>
<feature type="disulfide bond" evidence="2">
    <location>
        <begin position="21"/>
        <end position="38"/>
    </location>
</feature>
<evidence type="ECO:0000250" key="1"/>
<evidence type="ECO:0000250" key="2">
    <source>
        <dbReference type="UniProtKB" id="Q7Z094"/>
    </source>
</evidence>
<evidence type="ECO:0000305" key="3"/>
<reference key="1">
    <citation type="journal article" date="2008" name="Toxicon">
        <title>I(1)-superfamily conotoxins and prediction of single D-amino acid occurrence.</title>
        <authorList>
            <person name="Buczek O."/>
            <person name="Jimenez E.C."/>
            <person name="Yoshikami D."/>
            <person name="Imperial J.S."/>
            <person name="Watkins M."/>
            <person name="Morrison A."/>
            <person name="Olivera B.M."/>
        </authorList>
    </citation>
    <scope>NUCLEOTIDE SEQUENCE [MRNA]</scope>
    <source>
        <tissue>Venom duct</tissue>
    </source>
</reference>
<protein>
    <recommendedName>
        <fullName>Iota-conotoxin-like Fi11.8</fullName>
    </recommendedName>
</protein>
<organism>
    <name type="scientific">Conus figulinus</name>
    <name type="common">Fig cone</name>
    <dbReference type="NCBI Taxonomy" id="101301"/>
    <lineage>
        <taxon>Eukaryota</taxon>
        <taxon>Metazoa</taxon>
        <taxon>Spiralia</taxon>
        <taxon>Lophotrochozoa</taxon>
        <taxon>Mollusca</taxon>
        <taxon>Gastropoda</taxon>
        <taxon>Caenogastropoda</taxon>
        <taxon>Neogastropoda</taxon>
        <taxon>Conoidea</taxon>
        <taxon>Conidae</taxon>
        <taxon>Conus</taxon>
        <taxon>Dendroconus</taxon>
    </lineage>
</organism>
<proteinExistence type="evidence at transcript level"/>
<accession>P0C611</accession>